<organismHost>
    <name type="scientific">Bos taurus</name>
    <name type="common">Bovine</name>
    <dbReference type="NCBI Taxonomy" id="9913"/>
</organismHost>
<keyword id="KW-1015">Disulfide bond</keyword>
<keyword id="KW-0945">Host-virus interaction</keyword>
<keyword id="KW-0426">Late protein</keyword>
<keyword id="KW-0472">Membrane</keyword>
<keyword id="KW-1185">Reference proteome</keyword>
<keyword id="KW-0812">Transmembrane</keyword>
<keyword id="KW-1133">Transmembrane helix</keyword>
<keyword id="KW-1161">Viral attachment to host cell</keyword>
<keyword id="KW-0261">Viral envelope protein</keyword>
<keyword id="KW-0946">Virion</keyword>
<keyword id="KW-1160">Virus entry into host cell</keyword>
<sequence length="304" mass="35446">MPQQLSPINIETKKAISNARLKPLDIHYNESKPTTIQNTGKLVRINFKGGYISGGFLPNEYVLSSLHIYWGKEDDYGSNHLIDVYKYSGEINLVHWNKKKYSSYEEAKKHDDGLIIISIFLQVLDHKNVYFQKIVNQLDSIRSANTSAPFDSVFYLDNLLPSKLDYFTYLGTTINHSADAVWIIFPTPINIHSDQLSKFRTLLSSSNHDGKPHYITENYRNPYKLNDDTQVYYSGEIIRAATTSPARENYFMRWLSDLRETCFSYYQKYIEENKTFAIIAIVFVFILTAILFFMSRRYSREKQN</sequence>
<gene>
    <name type="primary">OPG105</name>
    <name type="ordered locus">VACWR113</name>
    <name type="ORF">D8L</name>
</gene>
<dbReference type="EMBL" id="J05190">
    <property type="protein sequence ID" value="AAA48233.1"/>
    <property type="molecule type" value="Genomic_DNA"/>
</dbReference>
<dbReference type="EMBL" id="AY243312">
    <property type="protein sequence ID" value="AAO89392.1"/>
    <property type="molecule type" value="Genomic_DNA"/>
</dbReference>
<dbReference type="PIR" id="A01146">
    <property type="entry name" value="CRVZW"/>
</dbReference>
<dbReference type="RefSeq" id="YP_232995.1">
    <property type="nucleotide sequence ID" value="NC_006998.1"/>
</dbReference>
<dbReference type="SMR" id="P04195"/>
<dbReference type="ABCD" id="P04195">
    <property type="antibodies" value="5 sequenced antibodies"/>
</dbReference>
<dbReference type="DNASU" id="3707569"/>
<dbReference type="GeneID" id="3707569"/>
<dbReference type="KEGG" id="vg:3707569"/>
<dbReference type="Proteomes" id="UP000000344">
    <property type="component" value="Genome"/>
</dbReference>
<dbReference type="GO" id="GO:0016020">
    <property type="term" value="C:membrane"/>
    <property type="evidence" value="ECO:0007669"/>
    <property type="project" value="UniProtKB-KW"/>
</dbReference>
<dbReference type="GO" id="GO:0019031">
    <property type="term" value="C:viral envelope"/>
    <property type="evidence" value="ECO:0007669"/>
    <property type="project" value="UniProtKB-KW"/>
</dbReference>
<dbReference type="GO" id="GO:0055036">
    <property type="term" value="C:virion membrane"/>
    <property type="evidence" value="ECO:0007669"/>
    <property type="project" value="UniProtKB-SubCell"/>
</dbReference>
<dbReference type="GO" id="GO:0004089">
    <property type="term" value="F:carbonate dehydratase activity"/>
    <property type="evidence" value="ECO:0007669"/>
    <property type="project" value="InterPro"/>
</dbReference>
<dbReference type="GO" id="GO:0008270">
    <property type="term" value="F:zinc ion binding"/>
    <property type="evidence" value="ECO:0007669"/>
    <property type="project" value="InterPro"/>
</dbReference>
<dbReference type="GO" id="GO:0046718">
    <property type="term" value="P:symbiont entry into host cell"/>
    <property type="evidence" value="ECO:0007669"/>
    <property type="project" value="UniProtKB-KW"/>
</dbReference>
<dbReference type="GO" id="GO:0019062">
    <property type="term" value="P:virion attachment to host cell"/>
    <property type="evidence" value="ECO:0007669"/>
    <property type="project" value="UniProtKB-KW"/>
</dbReference>
<dbReference type="Gene3D" id="3.10.200.10">
    <property type="entry name" value="Alpha carbonic anhydrase"/>
    <property type="match status" value="1"/>
</dbReference>
<dbReference type="InterPro" id="IPR001148">
    <property type="entry name" value="CA_dom"/>
</dbReference>
<dbReference type="InterPro" id="IPR036398">
    <property type="entry name" value="CA_dom_sf"/>
</dbReference>
<dbReference type="InterPro" id="IPR023561">
    <property type="entry name" value="Carbonic_anhydrase_a-class"/>
</dbReference>
<dbReference type="PANTHER" id="PTHR18952">
    <property type="entry name" value="CARBONIC ANHYDRASE"/>
    <property type="match status" value="1"/>
</dbReference>
<dbReference type="PANTHER" id="PTHR18952:SF124">
    <property type="entry name" value="CARBONIC ANHYDRASE 7"/>
    <property type="match status" value="1"/>
</dbReference>
<dbReference type="Pfam" id="PF00194">
    <property type="entry name" value="Carb_anhydrase"/>
    <property type="match status" value="1"/>
</dbReference>
<dbReference type="SMART" id="SM01057">
    <property type="entry name" value="Carb_anhydrase"/>
    <property type="match status" value="1"/>
</dbReference>
<dbReference type="SUPFAM" id="SSF51069">
    <property type="entry name" value="Carbonic anhydrase"/>
    <property type="match status" value="1"/>
</dbReference>
<dbReference type="PROSITE" id="PS51144">
    <property type="entry name" value="ALPHA_CA_2"/>
    <property type="match status" value="1"/>
</dbReference>
<name>CAHH_VACCW</name>
<proteinExistence type="evidence at transcript level"/>
<evidence type="ECO:0000250" key="1"/>
<evidence type="ECO:0000255" key="2"/>
<evidence type="ECO:0000255" key="3">
    <source>
        <dbReference type="PROSITE-ProRule" id="PRU01134"/>
    </source>
</evidence>
<evidence type="ECO:0000305" key="4"/>
<feature type="chain" id="PRO_0000077451" description="Cell surface-binding protein OPG105">
    <location>
        <begin position="1"/>
        <end position="304"/>
    </location>
</feature>
<feature type="topological domain" description="Virion surface" evidence="2">
    <location>
        <begin position="1"/>
        <end position="275"/>
    </location>
</feature>
<feature type="transmembrane region" description="Helical" evidence="2">
    <location>
        <begin position="276"/>
        <end position="294"/>
    </location>
</feature>
<feature type="topological domain" description="Intravirion" evidence="2">
    <location>
        <begin position="295"/>
        <end position="304"/>
    </location>
</feature>
<feature type="domain" description="Alpha-carbonic anhydrase" evidence="3">
    <location>
        <begin position="1"/>
        <end position="235"/>
    </location>
</feature>
<feature type="disulfide bond" description="Interchain" evidence="1">
    <location>
        <position position="262"/>
    </location>
</feature>
<feature type="sequence conflict" description="In Ref. 2; AAA48233." evidence="4" ref="2">
    <original>D</original>
    <variation>H</variation>
    <location>
        <position position="139"/>
    </location>
</feature>
<reference key="1">
    <citation type="journal article" date="1986" name="Virology">
        <title>Nucleotide sequence and genetic map of the 16-kb vaccinia virus HindIII D fragment.</title>
        <authorList>
            <person name="Niles E.G."/>
            <person name="Condit R.C."/>
            <person name="Caro P."/>
            <person name="Davidson K."/>
            <person name="Matusick L."/>
            <person name="Seto J."/>
        </authorList>
    </citation>
    <scope>NUCLEOTIDE SEQUENCE [GENOMIC DNA]</scope>
</reference>
<reference key="2">
    <citation type="journal article" date="1990" name="J. Biol. Chem.">
        <title>Structural and functional characterization of a cell surface binding protein of vaccinia virus.</title>
        <authorList>
            <person name="Maa J.-S."/>
            <person name="Rodriguez J.F."/>
            <person name="Esteban M."/>
        </authorList>
    </citation>
    <scope>NUCLEOTIDE SEQUENCE [GENOMIC DNA]</scope>
</reference>
<reference key="3">
    <citation type="submission" date="2003-02" db="EMBL/GenBank/DDBJ databases">
        <title>Sequencing of the coding region of Vaccinia-WR to an average 9-fold redundancy and an error rate of 0.16/10kb.</title>
        <authorList>
            <person name="Esposito J.J."/>
            <person name="Frace A.M."/>
            <person name="Sammons S.A."/>
            <person name="Olsen-Rasmussen M."/>
            <person name="Osborne J."/>
            <person name="Wohlhueter R."/>
        </authorList>
    </citation>
    <scope>NUCLEOTIDE SEQUENCE [LARGE SCALE GENOMIC DNA]</scope>
</reference>
<reference key="4">
    <citation type="journal article" date="1988" name="J. Virol.">
        <title>Vaccinia virus gene D8 encodes a virion transmembrane protein.</title>
        <authorList>
            <person name="Niles E.G."/>
            <person name="Seto J."/>
        </authorList>
    </citation>
    <scope>IDENTIFICATION OF PROTEIN</scope>
</reference>
<accession>P04195</accession>
<accession>Q76ZR9</accession>
<protein>
    <recommendedName>
        <fullName>Cell surface-binding protein OPG105</fullName>
    </recommendedName>
    <alternativeName>
        <fullName>Carbonic anhydrase homolog</fullName>
    </alternativeName>
</protein>
<comment type="function">
    <text evidence="1">Binds to chondroitin sulfate on the cell surface to provide virion attachment to target cell.</text>
</comment>
<comment type="subunit">
    <text>Homodimer; disulfide-linked.</text>
</comment>
<comment type="subcellular location">
    <subcellularLocation>
        <location evidence="4">Virion membrane</location>
    </subcellularLocation>
    <text evidence="4">Component of the mature virion (MV) membrane.</text>
</comment>
<comment type="induction">
    <text>Expressed in the late phase of the viral replicative cycle.</text>
</comment>
<comment type="PTM">
    <text>Apparently non-glycosylated.</text>
</comment>
<comment type="similarity">
    <text evidence="4">Belongs to the alpha-carbonic anhydrase family.</text>
</comment>
<organism>
    <name type="scientific">Vaccinia virus (strain Western Reserve)</name>
    <name type="common">VACV</name>
    <name type="synonym">Vaccinia virus (strain WR)</name>
    <dbReference type="NCBI Taxonomy" id="10254"/>
    <lineage>
        <taxon>Viruses</taxon>
        <taxon>Varidnaviria</taxon>
        <taxon>Bamfordvirae</taxon>
        <taxon>Nucleocytoviricota</taxon>
        <taxon>Pokkesviricetes</taxon>
        <taxon>Chitovirales</taxon>
        <taxon>Poxviridae</taxon>
        <taxon>Chordopoxvirinae</taxon>
        <taxon>Orthopoxvirus</taxon>
        <taxon>Vaccinia virus</taxon>
    </lineage>
</organism>